<dbReference type="EC" id="2.4.2.9" evidence="1"/>
<dbReference type="EMBL" id="CU928162">
    <property type="protein sequence ID" value="CAR09091.2"/>
    <property type="molecule type" value="Genomic_DNA"/>
</dbReference>
<dbReference type="RefSeq" id="WP_001295473.1">
    <property type="nucleotide sequence ID" value="NC_011745.1"/>
</dbReference>
<dbReference type="SMR" id="B7MYC5"/>
<dbReference type="GeneID" id="93774638"/>
<dbReference type="KEGG" id="ecq:ECED1_2921"/>
<dbReference type="HOGENOM" id="CLU_067096_2_2_6"/>
<dbReference type="UniPathway" id="UPA00574">
    <property type="reaction ID" value="UER00636"/>
</dbReference>
<dbReference type="Proteomes" id="UP000000748">
    <property type="component" value="Chromosome"/>
</dbReference>
<dbReference type="GO" id="GO:0005525">
    <property type="term" value="F:GTP binding"/>
    <property type="evidence" value="ECO:0007669"/>
    <property type="project" value="UniProtKB-KW"/>
</dbReference>
<dbReference type="GO" id="GO:0000287">
    <property type="term" value="F:magnesium ion binding"/>
    <property type="evidence" value="ECO:0007669"/>
    <property type="project" value="UniProtKB-UniRule"/>
</dbReference>
<dbReference type="GO" id="GO:0004845">
    <property type="term" value="F:uracil phosphoribosyltransferase activity"/>
    <property type="evidence" value="ECO:0007669"/>
    <property type="project" value="UniProtKB-UniRule"/>
</dbReference>
<dbReference type="GO" id="GO:0044206">
    <property type="term" value="P:UMP salvage"/>
    <property type="evidence" value="ECO:0007669"/>
    <property type="project" value="UniProtKB-UniRule"/>
</dbReference>
<dbReference type="GO" id="GO:0006223">
    <property type="term" value="P:uracil salvage"/>
    <property type="evidence" value="ECO:0007669"/>
    <property type="project" value="InterPro"/>
</dbReference>
<dbReference type="CDD" id="cd06223">
    <property type="entry name" value="PRTases_typeI"/>
    <property type="match status" value="1"/>
</dbReference>
<dbReference type="FunFam" id="3.40.50.2020:FF:000003">
    <property type="entry name" value="Uracil phosphoribosyltransferase"/>
    <property type="match status" value="1"/>
</dbReference>
<dbReference type="Gene3D" id="3.40.50.2020">
    <property type="match status" value="1"/>
</dbReference>
<dbReference type="HAMAP" id="MF_01218_B">
    <property type="entry name" value="Upp_B"/>
    <property type="match status" value="1"/>
</dbReference>
<dbReference type="InterPro" id="IPR000836">
    <property type="entry name" value="PRibTrfase_dom"/>
</dbReference>
<dbReference type="InterPro" id="IPR029057">
    <property type="entry name" value="PRTase-like"/>
</dbReference>
<dbReference type="InterPro" id="IPR034332">
    <property type="entry name" value="Upp_B"/>
</dbReference>
<dbReference type="InterPro" id="IPR050054">
    <property type="entry name" value="UPRTase/APRTase"/>
</dbReference>
<dbReference type="InterPro" id="IPR005765">
    <property type="entry name" value="Ura_phspho_trans"/>
</dbReference>
<dbReference type="NCBIfam" id="NF001097">
    <property type="entry name" value="PRK00129.1"/>
    <property type="match status" value="1"/>
</dbReference>
<dbReference type="NCBIfam" id="TIGR01091">
    <property type="entry name" value="upp"/>
    <property type="match status" value="1"/>
</dbReference>
<dbReference type="PANTHER" id="PTHR32315">
    <property type="entry name" value="ADENINE PHOSPHORIBOSYLTRANSFERASE"/>
    <property type="match status" value="1"/>
</dbReference>
<dbReference type="PANTHER" id="PTHR32315:SF4">
    <property type="entry name" value="URACIL PHOSPHORIBOSYLTRANSFERASE, CHLOROPLASTIC"/>
    <property type="match status" value="1"/>
</dbReference>
<dbReference type="Pfam" id="PF14681">
    <property type="entry name" value="UPRTase"/>
    <property type="match status" value="1"/>
</dbReference>
<dbReference type="SUPFAM" id="SSF53271">
    <property type="entry name" value="PRTase-like"/>
    <property type="match status" value="1"/>
</dbReference>
<comment type="function">
    <text evidence="1">Catalyzes the conversion of uracil and 5-phospho-alpha-D-ribose 1-diphosphate (PRPP) to UMP and diphosphate.</text>
</comment>
<comment type="catalytic activity">
    <reaction evidence="1">
        <text>UMP + diphosphate = 5-phospho-alpha-D-ribose 1-diphosphate + uracil</text>
        <dbReference type="Rhea" id="RHEA:13017"/>
        <dbReference type="ChEBI" id="CHEBI:17568"/>
        <dbReference type="ChEBI" id="CHEBI:33019"/>
        <dbReference type="ChEBI" id="CHEBI:57865"/>
        <dbReference type="ChEBI" id="CHEBI:58017"/>
        <dbReference type="EC" id="2.4.2.9"/>
    </reaction>
</comment>
<comment type="cofactor">
    <cofactor evidence="1">
        <name>Mg(2+)</name>
        <dbReference type="ChEBI" id="CHEBI:18420"/>
    </cofactor>
    <text evidence="1">Binds 1 Mg(2+) ion per subunit. The magnesium is bound as Mg-PRPP.</text>
</comment>
<comment type="activity regulation">
    <text evidence="1">Allosterically activated by GTP.</text>
</comment>
<comment type="pathway">
    <text evidence="1">Pyrimidine metabolism; UMP biosynthesis via salvage pathway; UMP from uracil: step 1/1.</text>
</comment>
<comment type="similarity">
    <text evidence="1">Belongs to the UPRTase family.</text>
</comment>
<keyword id="KW-0021">Allosteric enzyme</keyword>
<keyword id="KW-0328">Glycosyltransferase</keyword>
<keyword id="KW-0342">GTP-binding</keyword>
<keyword id="KW-0460">Magnesium</keyword>
<keyword id="KW-0547">Nucleotide-binding</keyword>
<keyword id="KW-0808">Transferase</keyword>
<proteinExistence type="inferred from homology"/>
<sequence>MKIVEVKHPLVKHKLGLMREQDISTKRFRELASEVGSLLTYEATADLETEKVTIEGWNGPVEIDQIKGKKITVVPILRAGLGMMDGVLENVPSARISVVGMYRNEETLEPVPYFQKLVSNIDERMALIVDPMLATGGSVIATIDLLKKAGCSSIKVLVLVAAPEGIAALEKAHPDVELYTASIDQGLNEHGYIIPGLGDAGDKIFGTK</sequence>
<organism>
    <name type="scientific">Escherichia coli O81 (strain ED1a)</name>
    <dbReference type="NCBI Taxonomy" id="585397"/>
    <lineage>
        <taxon>Bacteria</taxon>
        <taxon>Pseudomonadati</taxon>
        <taxon>Pseudomonadota</taxon>
        <taxon>Gammaproteobacteria</taxon>
        <taxon>Enterobacterales</taxon>
        <taxon>Enterobacteriaceae</taxon>
        <taxon>Escherichia</taxon>
    </lineage>
</organism>
<reference key="1">
    <citation type="journal article" date="2009" name="PLoS Genet.">
        <title>Organised genome dynamics in the Escherichia coli species results in highly diverse adaptive paths.</title>
        <authorList>
            <person name="Touchon M."/>
            <person name="Hoede C."/>
            <person name="Tenaillon O."/>
            <person name="Barbe V."/>
            <person name="Baeriswyl S."/>
            <person name="Bidet P."/>
            <person name="Bingen E."/>
            <person name="Bonacorsi S."/>
            <person name="Bouchier C."/>
            <person name="Bouvet O."/>
            <person name="Calteau A."/>
            <person name="Chiapello H."/>
            <person name="Clermont O."/>
            <person name="Cruveiller S."/>
            <person name="Danchin A."/>
            <person name="Diard M."/>
            <person name="Dossat C."/>
            <person name="Karoui M.E."/>
            <person name="Frapy E."/>
            <person name="Garry L."/>
            <person name="Ghigo J.M."/>
            <person name="Gilles A.M."/>
            <person name="Johnson J."/>
            <person name="Le Bouguenec C."/>
            <person name="Lescat M."/>
            <person name="Mangenot S."/>
            <person name="Martinez-Jehanne V."/>
            <person name="Matic I."/>
            <person name="Nassif X."/>
            <person name="Oztas S."/>
            <person name="Petit M.A."/>
            <person name="Pichon C."/>
            <person name="Rouy Z."/>
            <person name="Ruf C.S."/>
            <person name="Schneider D."/>
            <person name="Tourret J."/>
            <person name="Vacherie B."/>
            <person name="Vallenet D."/>
            <person name="Medigue C."/>
            <person name="Rocha E.P.C."/>
            <person name="Denamur E."/>
        </authorList>
    </citation>
    <scope>NUCLEOTIDE SEQUENCE [LARGE SCALE GENOMIC DNA]</scope>
    <source>
        <strain>ED1a</strain>
    </source>
</reference>
<name>UPP_ECO81</name>
<accession>B7MYC5</accession>
<evidence type="ECO:0000255" key="1">
    <source>
        <dbReference type="HAMAP-Rule" id="MF_01218"/>
    </source>
</evidence>
<feature type="chain" id="PRO_1000164825" description="Uracil phosphoribosyltransferase">
    <location>
        <begin position="1"/>
        <end position="208"/>
    </location>
</feature>
<feature type="binding site" evidence="1">
    <location>
        <position position="78"/>
    </location>
    <ligand>
        <name>5-phospho-alpha-D-ribose 1-diphosphate</name>
        <dbReference type="ChEBI" id="CHEBI:58017"/>
    </ligand>
</feature>
<feature type="binding site" evidence="1">
    <location>
        <position position="103"/>
    </location>
    <ligand>
        <name>5-phospho-alpha-D-ribose 1-diphosphate</name>
        <dbReference type="ChEBI" id="CHEBI:58017"/>
    </ligand>
</feature>
<feature type="binding site" evidence="1">
    <location>
        <begin position="130"/>
        <end position="138"/>
    </location>
    <ligand>
        <name>5-phospho-alpha-D-ribose 1-diphosphate</name>
        <dbReference type="ChEBI" id="CHEBI:58017"/>
    </ligand>
</feature>
<feature type="binding site" evidence="1">
    <location>
        <position position="193"/>
    </location>
    <ligand>
        <name>uracil</name>
        <dbReference type="ChEBI" id="CHEBI:17568"/>
    </ligand>
</feature>
<feature type="binding site" evidence="1">
    <location>
        <begin position="198"/>
        <end position="200"/>
    </location>
    <ligand>
        <name>uracil</name>
        <dbReference type="ChEBI" id="CHEBI:17568"/>
    </ligand>
</feature>
<feature type="binding site" evidence="1">
    <location>
        <position position="199"/>
    </location>
    <ligand>
        <name>5-phospho-alpha-D-ribose 1-diphosphate</name>
        <dbReference type="ChEBI" id="CHEBI:58017"/>
    </ligand>
</feature>
<gene>
    <name evidence="1" type="primary">upp</name>
    <name type="ordered locus">ECED1_2921</name>
</gene>
<protein>
    <recommendedName>
        <fullName evidence="1">Uracil phosphoribosyltransferase</fullName>
        <ecNumber evidence="1">2.4.2.9</ecNumber>
    </recommendedName>
    <alternativeName>
        <fullName evidence="1">UMP pyrophosphorylase</fullName>
    </alternativeName>
    <alternativeName>
        <fullName evidence="1">UPRTase</fullName>
    </alternativeName>
</protein>